<proteinExistence type="inferred from homology"/>
<keyword id="KW-0028">Amino-acid biosynthesis</keyword>
<keyword id="KW-0057">Aromatic amino acid biosynthesis</keyword>
<keyword id="KW-0170">Cobalt</keyword>
<keyword id="KW-0963">Cytoplasm</keyword>
<keyword id="KW-0456">Lyase</keyword>
<keyword id="KW-0479">Metal-binding</keyword>
<keyword id="KW-0520">NAD</keyword>
<keyword id="KW-0547">Nucleotide-binding</keyword>
<keyword id="KW-1185">Reference proteome</keyword>
<keyword id="KW-0862">Zinc</keyword>
<reference key="1">
    <citation type="submission" date="2006-10" db="EMBL/GenBank/DDBJ databases">
        <title>Complete sequence of chromosome of Pelobacter propionicus DSM 2379.</title>
        <authorList>
            <consortium name="US DOE Joint Genome Institute"/>
            <person name="Copeland A."/>
            <person name="Lucas S."/>
            <person name="Lapidus A."/>
            <person name="Barry K."/>
            <person name="Detter J.C."/>
            <person name="Glavina del Rio T."/>
            <person name="Hammon N."/>
            <person name="Israni S."/>
            <person name="Dalin E."/>
            <person name="Tice H."/>
            <person name="Pitluck S."/>
            <person name="Saunders E."/>
            <person name="Brettin T."/>
            <person name="Bruce D."/>
            <person name="Han C."/>
            <person name="Tapia R."/>
            <person name="Schmutz J."/>
            <person name="Larimer F."/>
            <person name="Land M."/>
            <person name="Hauser L."/>
            <person name="Kyrpides N."/>
            <person name="Kim E."/>
            <person name="Lovley D."/>
            <person name="Richardson P."/>
        </authorList>
    </citation>
    <scope>NUCLEOTIDE SEQUENCE [LARGE SCALE GENOMIC DNA]</scope>
    <source>
        <strain>DSM 2379 / NBRC 103807 / OttBd1</strain>
    </source>
</reference>
<dbReference type="EC" id="4.2.3.4" evidence="1"/>
<dbReference type="EMBL" id="CP000482">
    <property type="protein sequence ID" value="ABK99635.1"/>
    <property type="molecule type" value="Genomic_DNA"/>
</dbReference>
<dbReference type="RefSeq" id="WP_011735901.1">
    <property type="nucleotide sequence ID" value="NC_008609.1"/>
</dbReference>
<dbReference type="SMR" id="A1AQL5"/>
<dbReference type="STRING" id="338966.Ppro_2027"/>
<dbReference type="KEGG" id="ppd:Ppro_2027"/>
<dbReference type="eggNOG" id="COG0337">
    <property type="taxonomic scope" value="Bacteria"/>
</dbReference>
<dbReference type="HOGENOM" id="CLU_001201_0_2_7"/>
<dbReference type="OrthoDB" id="9806583at2"/>
<dbReference type="UniPathway" id="UPA00053">
    <property type="reaction ID" value="UER00085"/>
</dbReference>
<dbReference type="Proteomes" id="UP000006732">
    <property type="component" value="Chromosome"/>
</dbReference>
<dbReference type="GO" id="GO:0005737">
    <property type="term" value="C:cytoplasm"/>
    <property type="evidence" value="ECO:0007669"/>
    <property type="project" value="UniProtKB-SubCell"/>
</dbReference>
<dbReference type="GO" id="GO:0003856">
    <property type="term" value="F:3-dehydroquinate synthase activity"/>
    <property type="evidence" value="ECO:0007669"/>
    <property type="project" value="UniProtKB-UniRule"/>
</dbReference>
<dbReference type="GO" id="GO:0046872">
    <property type="term" value="F:metal ion binding"/>
    <property type="evidence" value="ECO:0007669"/>
    <property type="project" value="UniProtKB-KW"/>
</dbReference>
<dbReference type="GO" id="GO:0000166">
    <property type="term" value="F:nucleotide binding"/>
    <property type="evidence" value="ECO:0007669"/>
    <property type="project" value="UniProtKB-KW"/>
</dbReference>
<dbReference type="GO" id="GO:0008652">
    <property type="term" value="P:amino acid biosynthetic process"/>
    <property type="evidence" value="ECO:0007669"/>
    <property type="project" value="UniProtKB-KW"/>
</dbReference>
<dbReference type="GO" id="GO:0009073">
    <property type="term" value="P:aromatic amino acid family biosynthetic process"/>
    <property type="evidence" value="ECO:0007669"/>
    <property type="project" value="UniProtKB-KW"/>
</dbReference>
<dbReference type="GO" id="GO:0009423">
    <property type="term" value="P:chorismate biosynthetic process"/>
    <property type="evidence" value="ECO:0007669"/>
    <property type="project" value="UniProtKB-UniRule"/>
</dbReference>
<dbReference type="CDD" id="cd08195">
    <property type="entry name" value="DHQS"/>
    <property type="match status" value="1"/>
</dbReference>
<dbReference type="FunFam" id="3.40.50.1970:FF:000001">
    <property type="entry name" value="3-dehydroquinate synthase"/>
    <property type="match status" value="1"/>
</dbReference>
<dbReference type="Gene3D" id="3.40.50.1970">
    <property type="match status" value="1"/>
</dbReference>
<dbReference type="Gene3D" id="1.20.1090.10">
    <property type="entry name" value="Dehydroquinate synthase-like - alpha domain"/>
    <property type="match status" value="1"/>
</dbReference>
<dbReference type="HAMAP" id="MF_00110">
    <property type="entry name" value="DHQ_synthase"/>
    <property type="match status" value="1"/>
</dbReference>
<dbReference type="InterPro" id="IPR050071">
    <property type="entry name" value="Dehydroquinate_synthase"/>
</dbReference>
<dbReference type="InterPro" id="IPR016037">
    <property type="entry name" value="DHQ_synth_AroB"/>
</dbReference>
<dbReference type="InterPro" id="IPR030963">
    <property type="entry name" value="DHQ_synth_fam"/>
</dbReference>
<dbReference type="InterPro" id="IPR030960">
    <property type="entry name" value="DHQS/DOIS_N"/>
</dbReference>
<dbReference type="InterPro" id="IPR056179">
    <property type="entry name" value="DHQS_C"/>
</dbReference>
<dbReference type="NCBIfam" id="TIGR01357">
    <property type="entry name" value="aroB"/>
    <property type="match status" value="1"/>
</dbReference>
<dbReference type="PANTHER" id="PTHR43622">
    <property type="entry name" value="3-DEHYDROQUINATE SYNTHASE"/>
    <property type="match status" value="1"/>
</dbReference>
<dbReference type="PANTHER" id="PTHR43622:SF7">
    <property type="entry name" value="3-DEHYDROQUINATE SYNTHASE, CHLOROPLASTIC"/>
    <property type="match status" value="1"/>
</dbReference>
<dbReference type="Pfam" id="PF01761">
    <property type="entry name" value="DHQ_synthase"/>
    <property type="match status" value="1"/>
</dbReference>
<dbReference type="Pfam" id="PF24621">
    <property type="entry name" value="DHQS_C"/>
    <property type="match status" value="1"/>
</dbReference>
<dbReference type="PIRSF" id="PIRSF001455">
    <property type="entry name" value="DHQ_synth"/>
    <property type="match status" value="1"/>
</dbReference>
<dbReference type="SUPFAM" id="SSF56796">
    <property type="entry name" value="Dehydroquinate synthase-like"/>
    <property type="match status" value="1"/>
</dbReference>
<organism>
    <name type="scientific">Pelobacter propionicus (strain DSM 2379 / NBRC 103807 / OttBd1)</name>
    <dbReference type="NCBI Taxonomy" id="338966"/>
    <lineage>
        <taxon>Bacteria</taxon>
        <taxon>Pseudomonadati</taxon>
        <taxon>Thermodesulfobacteriota</taxon>
        <taxon>Desulfuromonadia</taxon>
        <taxon>Desulfuromonadales</taxon>
        <taxon>Desulfuromonadaceae</taxon>
        <taxon>Pelobacter</taxon>
    </lineage>
</organism>
<sequence length="359" mass="38421">MSVLTVNLGENSYDILIDGGTLPSLGRHCLERGLSGRVAVISNPAVAELYAEQVRASLVESGNQVTLILIPEGEEHKNAATLNLVYDQLIQAGLDRNSYIVALGGGVVGDLAGFAAATFLRGIPFVQVPTTLLAQVDSSVGGKTAIDHPRGKNLIGAFYQPRLVLIDVETLTTLPQREFRAGLAEVIKYGVAMDLAFYELLERDSGRILEMDADCLERIVLRCCELKARVVEQDEKESGLRAILNYGHTLGHAIETLAGYGTLVHGEAVAIGMVLAARISLAGGYCSEGDVSRIVALLGRFGLPCIPPRIDQGRLAETLLTDKKSRSGIIRFICNRGIGDCVVVNLTAEQLLTLSGLEV</sequence>
<protein>
    <recommendedName>
        <fullName evidence="1">3-dehydroquinate synthase</fullName>
        <shortName evidence="1">DHQS</shortName>
        <ecNumber evidence="1">4.2.3.4</ecNumber>
    </recommendedName>
</protein>
<gene>
    <name evidence="1" type="primary">aroB</name>
    <name type="ordered locus">Ppro_2027</name>
</gene>
<name>AROB_PELPD</name>
<evidence type="ECO:0000255" key="1">
    <source>
        <dbReference type="HAMAP-Rule" id="MF_00110"/>
    </source>
</evidence>
<feature type="chain" id="PRO_1000202916" description="3-dehydroquinate synthase">
    <location>
        <begin position="1"/>
        <end position="359"/>
    </location>
</feature>
<feature type="binding site" evidence="1">
    <location>
        <begin position="72"/>
        <end position="77"/>
    </location>
    <ligand>
        <name>NAD(+)</name>
        <dbReference type="ChEBI" id="CHEBI:57540"/>
    </ligand>
</feature>
<feature type="binding site" evidence="1">
    <location>
        <begin position="106"/>
        <end position="110"/>
    </location>
    <ligand>
        <name>NAD(+)</name>
        <dbReference type="ChEBI" id="CHEBI:57540"/>
    </ligand>
</feature>
<feature type="binding site" evidence="1">
    <location>
        <begin position="130"/>
        <end position="131"/>
    </location>
    <ligand>
        <name>NAD(+)</name>
        <dbReference type="ChEBI" id="CHEBI:57540"/>
    </ligand>
</feature>
<feature type="binding site" evidence="1">
    <location>
        <position position="143"/>
    </location>
    <ligand>
        <name>NAD(+)</name>
        <dbReference type="ChEBI" id="CHEBI:57540"/>
    </ligand>
</feature>
<feature type="binding site" evidence="1">
    <location>
        <position position="152"/>
    </location>
    <ligand>
        <name>NAD(+)</name>
        <dbReference type="ChEBI" id="CHEBI:57540"/>
    </ligand>
</feature>
<feature type="binding site" evidence="1">
    <location>
        <begin position="170"/>
        <end position="173"/>
    </location>
    <ligand>
        <name>NAD(+)</name>
        <dbReference type="ChEBI" id="CHEBI:57540"/>
    </ligand>
</feature>
<feature type="binding site" evidence="1">
    <location>
        <position position="185"/>
    </location>
    <ligand>
        <name>Zn(2+)</name>
        <dbReference type="ChEBI" id="CHEBI:29105"/>
    </ligand>
</feature>
<feature type="binding site" evidence="1">
    <location>
        <position position="248"/>
    </location>
    <ligand>
        <name>Zn(2+)</name>
        <dbReference type="ChEBI" id="CHEBI:29105"/>
    </ligand>
</feature>
<feature type="binding site" evidence="1">
    <location>
        <position position="265"/>
    </location>
    <ligand>
        <name>Zn(2+)</name>
        <dbReference type="ChEBI" id="CHEBI:29105"/>
    </ligand>
</feature>
<accession>A1AQL5</accession>
<comment type="function">
    <text evidence="1">Catalyzes the conversion of 3-deoxy-D-arabino-heptulosonate 7-phosphate (DAHP) to dehydroquinate (DHQ).</text>
</comment>
<comment type="catalytic activity">
    <reaction evidence="1">
        <text>7-phospho-2-dehydro-3-deoxy-D-arabino-heptonate = 3-dehydroquinate + phosphate</text>
        <dbReference type="Rhea" id="RHEA:21968"/>
        <dbReference type="ChEBI" id="CHEBI:32364"/>
        <dbReference type="ChEBI" id="CHEBI:43474"/>
        <dbReference type="ChEBI" id="CHEBI:58394"/>
        <dbReference type="EC" id="4.2.3.4"/>
    </reaction>
</comment>
<comment type="cofactor">
    <cofactor evidence="1">
        <name>Co(2+)</name>
        <dbReference type="ChEBI" id="CHEBI:48828"/>
    </cofactor>
    <cofactor evidence="1">
        <name>Zn(2+)</name>
        <dbReference type="ChEBI" id="CHEBI:29105"/>
    </cofactor>
    <text evidence="1">Binds 1 divalent metal cation per subunit. Can use either Co(2+) or Zn(2+).</text>
</comment>
<comment type="cofactor">
    <cofactor evidence="1">
        <name>NAD(+)</name>
        <dbReference type="ChEBI" id="CHEBI:57540"/>
    </cofactor>
</comment>
<comment type="pathway">
    <text evidence="1">Metabolic intermediate biosynthesis; chorismate biosynthesis; chorismate from D-erythrose 4-phosphate and phosphoenolpyruvate: step 2/7.</text>
</comment>
<comment type="subcellular location">
    <subcellularLocation>
        <location evidence="1">Cytoplasm</location>
    </subcellularLocation>
</comment>
<comment type="similarity">
    <text evidence="1">Belongs to the sugar phosphate cyclases superfamily. Dehydroquinate synthase family.</text>
</comment>